<feature type="chain" id="PRO_0000397226" description="Unknown protein 1">
    <location>
        <begin position="1"/>
        <end position="182"/>
    </location>
</feature>
<reference evidence="3" key="1">
    <citation type="submission" date="2006-03" db="EMBL/GenBank/DDBJ databases">
        <title>Sunflower (Helianthus annuus) ESTs (set 2) from the compositae genome project http://compgenomics.ucdavis.edu/.</title>
        <authorList>
            <person name="Michelmore R.W."/>
            <person name="Knapp S."/>
            <person name="Rieseberg L."/>
            <person name="Bradford K."/>
            <person name="Kesseli R."/>
            <person name="Boore J."/>
            <person name="Kozik A."/>
            <person name="Matvienko M."/>
            <person name="Lavelle D."/>
            <person name="Lai Z."/>
        </authorList>
    </citation>
    <scope>NUCLEOTIDE SEQUENCE [LARGE SCALE MRNA]</scope>
    <source>
        <strain evidence="1">cv. ANN1312</strain>
    </source>
</reference>
<reference evidence="3" key="2">
    <citation type="journal article" date="2009" name="Metallomics">
        <title>Evaluation of metal-ion stress in sunflower (Heliantus annus L.) leaves through proteomic changes.</title>
        <authorList>
            <person name="Garcia J.S."/>
            <person name="Souza G.H.M.F."/>
            <person name="Eberlin M.N."/>
            <person name="Arruda M.A.Z."/>
        </authorList>
    </citation>
    <scope>IDENTIFICATION BY MASS SPECTROMETRY</scope>
    <scope>INDUCTION</scope>
</reference>
<proteinExistence type="evidence at protein level"/>
<dbReference type="EMBL" id="DY914633">
    <property type="status" value="NOT_ANNOTATED_CDS"/>
    <property type="molecule type" value="mRNA"/>
</dbReference>
<dbReference type="SMR" id="P85192"/>
<dbReference type="InterPro" id="IPR038971">
    <property type="entry name" value="SMR11/SMR16"/>
</dbReference>
<dbReference type="PANTHER" id="PTHR36310">
    <property type="entry name" value="CYCLIN-DEPENDENT PROTEIN KINASE INHIBITOR SMR11"/>
    <property type="match status" value="1"/>
</dbReference>
<dbReference type="PANTHER" id="PTHR36310:SF1">
    <property type="entry name" value="CYCLIN-DEPENDENT PROTEIN KINASE INHIBITOR SMR11"/>
    <property type="match status" value="1"/>
</dbReference>
<protein>
    <recommendedName>
        <fullName>Unknown protein 1</fullName>
    </recommendedName>
</protein>
<organism>
    <name type="scientific">Helianthus annuus</name>
    <name type="common">Common sunflower</name>
    <dbReference type="NCBI Taxonomy" id="4232"/>
    <lineage>
        <taxon>Eukaryota</taxon>
        <taxon>Viridiplantae</taxon>
        <taxon>Streptophyta</taxon>
        <taxon>Embryophyta</taxon>
        <taxon>Tracheophyta</taxon>
        <taxon>Spermatophyta</taxon>
        <taxon>Magnoliopsida</taxon>
        <taxon>eudicotyledons</taxon>
        <taxon>Gunneridae</taxon>
        <taxon>Pentapetalae</taxon>
        <taxon>asterids</taxon>
        <taxon>campanulids</taxon>
        <taxon>Asterales</taxon>
        <taxon>Asteraceae</taxon>
        <taxon>Asteroideae</taxon>
        <taxon>Heliantheae alliance</taxon>
        <taxon>Heliantheae</taxon>
        <taxon>Helianthus</taxon>
    </lineage>
</organism>
<sequence>MGVIENIENTSFESVKKSDKSSTLMESKNSDLCPITPYLTEEKVKVTSRLNEDLSTPVEDVFDMCVSGSNQKNNLGTSAAKKKLVFSSNEYVSENECENGSLMETVYESVLEDIICKQAEDILAEILVSGSSRDVLKTPPSAARADGLVETCPGAPMKRKQVRNKRTVDMNLCRKLDFDSCV</sequence>
<evidence type="ECO:0000269" key="1">
    <source ref="1"/>
</evidence>
<evidence type="ECO:0000269" key="2">
    <source ref="2"/>
</evidence>
<evidence type="ECO:0000305" key="3"/>
<name>UP1_HELAN</name>
<accession>P85192</accession>
<comment type="induction">
    <text evidence="2">Up-regulated in response to zinc ion contamination, but not in response to mixed metal ion contamination (cadmium, copper, lead and zinc).</text>
</comment>